<dbReference type="EC" id="4.1.1.39" evidence="1"/>
<dbReference type="EMBL" id="L11682">
    <property type="protein sequence ID" value="AAA84623.1"/>
    <property type="molecule type" value="Genomic_DNA"/>
</dbReference>
<dbReference type="GO" id="GO:0009507">
    <property type="term" value="C:chloroplast"/>
    <property type="evidence" value="ECO:0007669"/>
    <property type="project" value="UniProtKB-SubCell"/>
</dbReference>
<dbReference type="GO" id="GO:0000287">
    <property type="term" value="F:magnesium ion binding"/>
    <property type="evidence" value="ECO:0007669"/>
    <property type="project" value="InterPro"/>
</dbReference>
<dbReference type="GO" id="GO:0004497">
    <property type="term" value="F:monooxygenase activity"/>
    <property type="evidence" value="ECO:0007669"/>
    <property type="project" value="UniProtKB-KW"/>
</dbReference>
<dbReference type="GO" id="GO:0016984">
    <property type="term" value="F:ribulose-bisphosphate carboxylase activity"/>
    <property type="evidence" value="ECO:0007669"/>
    <property type="project" value="UniProtKB-EC"/>
</dbReference>
<dbReference type="GO" id="GO:0009853">
    <property type="term" value="P:photorespiration"/>
    <property type="evidence" value="ECO:0007669"/>
    <property type="project" value="UniProtKB-KW"/>
</dbReference>
<dbReference type="GO" id="GO:0019253">
    <property type="term" value="P:reductive pentose-phosphate cycle"/>
    <property type="evidence" value="ECO:0007669"/>
    <property type="project" value="UniProtKB-KW"/>
</dbReference>
<dbReference type="CDD" id="cd08212">
    <property type="entry name" value="RuBisCO_large_I"/>
    <property type="match status" value="1"/>
</dbReference>
<dbReference type="FunFam" id="3.20.20.110:FF:000001">
    <property type="entry name" value="Ribulose bisphosphate carboxylase large chain"/>
    <property type="match status" value="1"/>
</dbReference>
<dbReference type="Gene3D" id="3.20.20.110">
    <property type="entry name" value="Ribulose bisphosphate carboxylase, large subunit, C-terminal domain"/>
    <property type="match status" value="1"/>
</dbReference>
<dbReference type="Gene3D" id="3.30.70.150">
    <property type="entry name" value="RuBisCO large subunit, N-terminal domain"/>
    <property type="match status" value="1"/>
</dbReference>
<dbReference type="HAMAP" id="MF_01338">
    <property type="entry name" value="RuBisCO_L_type1"/>
    <property type="match status" value="1"/>
</dbReference>
<dbReference type="InterPro" id="IPR033966">
    <property type="entry name" value="RuBisCO"/>
</dbReference>
<dbReference type="InterPro" id="IPR020878">
    <property type="entry name" value="RuBisCo_large_chain_AS"/>
</dbReference>
<dbReference type="InterPro" id="IPR000685">
    <property type="entry name" value="RuBisCO_lsu_C"/>
</dbReference>
<dbReference type="InterPro" id="IPR036376">
    <property type="entry name" value="RuBisCO_lsu_C_sf"/>
</dbReference>
<dbReference type="InterPro" id="IPR017443">
    <property type="entry name" value="RuBisCO_lsu_fd_N"/>
</dbReference>
<dbReference type="InterPro" id="IPR036422">
    <property type="entry name" value="RuBisCO_lsu_N_sf"/>
</dbReference>
<dbReference type="InterPro" id="IPR020888">
    <property type="entry name" value="RuBisCO_lsuI"/>
</dbReference>
<dbReference type="NCBIfam" id="NF003252">
    <property type="entry name" value="PRK04208.1"/>
    <property type="match status" value="1"/>
</dbReference>
<dbReference type="PANTHER" id="PTHR42704">
    <property type="entry name" value="RIBULOSE BISPHOSPHATE CARBOXYLASE"/>
    <property type="match status" value="1"/>
</dbReference>
<dbReference type="PANTHER" id="PTHR42704:SF15">
    <property type="entry name" value="RIBULOSE BISPHOSPHATE CARBOXYLASE LARGE CHAIN"/>
    <property type="match status" value="1"/>
</dbReference>
<dbReference type="Pfam" id="PF00016">
    <property type="entry name" value="RuBisCO_large"/>
    <property type="match status" value="1"/>
</dbReference>
<dbReference type="Pfam" id="PF02788">
    <property type="entry name" value="RuBisCO_large_N"/>
    <property type="match status" value="1"/>
</dbReference>
<dbReference type="SFLD" id="SFLDG01052">
    <property type="entry name" value="RuBisCO"/>
    <property type="match status" value="1"/>
</dbReference>
<dbReference type="SFLD" id="SFLDS00014">
    <property type="entry name" value="RuBisCO"/>
    <property type="match status" value="1"/>
</dbReference>
<dbReference type="SFLD" id="SFLDG00301">
    <property type="entry name" value="RuBisCO-like_proteins"/>
    <property type="match status" value="1"/>
</dbReference>
<dbReference type="SUPFAM" id="SSF51649">
    <property type="entry name" value="RuBisCo, C-terminal domain"/>
    <property type="match status" value="1"/>
</dbReference>
<dbReference type="SUPFAM" id="SSF54966">
    <property type="entry name" value="RuBisCO, large subunit, small (N-terminal) domain"/>
    <property type="match status" value="1"/>
</dbReference>
<dbReference type="PROSITE" id="PS00157">
    <property type="entry name" value="RUBISCO_LARGE"/>
    <property type="match status" value="1"/>
</dbReference>
<name>RBL_SYMAL</name>
<accession>Q05993</accession>
<keyword id="KW-0113">Calvin cycle</keyword>
<keyword id="KW-0120">Carbon dioxide fixation</keyword>
<keyword id="KW-0150">Chloroplast</keyword>
<keyword id="KW-1015">Disulfide bond</keyword>
<keyword id="KW-0456">Lyase</keyword>
<keyword id="KW-0460">Magnesium</keyword>
<keyword id="KW-0479">Metal-binding</keyword>
<keyword id="KW-0503">Monooxygenase</keyword>
<keyword id="KW-0560">Oxidoreductase</keyword>
<keyword id="KW-0601">Photorespiration</keyword>
<keyword id="KW-0602">Photosynthesis</keyword>
<keyword id="KW-0934">Plastid</keyword>
<sequence>DILAAFRVTPQPGVPPEEAGAAVAAESSTGTWTTVWTDGLTSLDRYKGRCYHIEPVPGEETQFIAYVAYPLDLFEEGSVTNMFTSIVGNVFGFKALRALRLEDLRIPVAYVKTFQGPPHGIQVERDKLNKYGRPLLGCTIKPKLGLSAKXYGRAVYECLRGGLDFTKDDENVNSQPFMRWRDRFLFCAEAIYKAQAETGEIKGHYLNATAGTCEDMMKRAVFARELGVPIVMHDYLTGGFTANTTLAHYCRDNGLLLHIHRAMHAVIDRQKNHGMHFRVLAKALRMSGGDHIHSGXVVGKLEGEREITLGFVDLLXXDFIEKVRSRGIXFTQDWVSLPGVLPVASGGIHVWHMPALTEIFGDDSVLQFGGGTLGHPWGNAPGAVRNRVALEACVQARNEGRDLAREGNEIIRXACKWSPELAAACEVWKEIKFEFEAMDTL</sequence>
<proteinExistence type="inferred from homology"/>
<gene>
    <name evidence="1" type="primary">rbcL</name>
</gene>
<feature type="chain" id="PRO_0000062599" description="Ribulose bisphosphate carboxylase large chain">
    <location>
        <begin position="1" status="less than"/>
        <end position="441"/>
    </location>
</feature>
<feature type="active site" description="Proton acceptor" evidence="1">
    <location>
        <position position="141"/>
    </location>
</feature>
<feature type="active site" description="Proton acceptor" evidence="1">
    <location>
        <position position="260"/>
    </location>
</feature>
<feature type="binding site" description="in homodimeric partner" evidence="1">
    <location>
        <position position="89"/>
    </location>
    <ligand>
        <name>substrate</name>
    </ligand>
</feature>
<feature type="binding site" evidence="1">
    <location>
        <position position="139"/>
    </location>
    <ligand>
        <name>substrate</name>
    </ligand>
</feature>
<feature type="binding site" evidence="1">
    <location>
        <position position="143"/>
    </location>
    <ligand>
        <name>substrate</name>
    </ligand>
</feature>
<feature type="binding site" description="via carbamate group" evidence="1">
    <location>
        <position position="167"/>
    </location>
    <ligand>
        <name>Mg(2+)</name>
        <dbReference type="ChEBI" id="CHEBI:18420"/>
    </ligand>
</feature>
<feature type="binding site" evidence="1">
    <location>
        <position position="169"/>
    </location>
    <ligand>
        <name>Mg(2+)</name>
        <dbReference type="ChEBI" id="CHEBI:18420"/>
    </ligand>
</feature>
<feature type="binding site" evidence="1">
    <location>
        <position position="170"/>
    </location>
    <ligand>
        <name>Mg(2+)</name>
        <dbReference type="ChEBI" id="CHEBI:18420"/>
    </ligand>
</feature>
<feature type="binding site" evidence="1">
    <location>
        <position position="261"/>
    </location>
    <ligand>
        <name>substrate</name>
    </ligand>
</feature>
<feature type="binding site" evidence="1">
    <location>
        <position position="293"/>
    </location>
    <ligand>
        <name>substrate</name>
    </ligand>
</feature>
<feature type="binding site" evidence="1">
    <location>
        <position position="345"/>
    </location>
    <ligand>
        <name>substrate</name>
    </ligand>
</feature>
<feature type="site" description="Transition state stabilizer" evidence="1">
    <location>
        <position position="300"/>
    </location>
</feature>
<feature type="modified residue" description="N6-carboxylysine" evidence="1">
    <location>
        <position position="167"/>
    </location>
</feature>
<feature type="disulfide bond" description="Interchain; in linked form" evidence="1">
    <location>
        <position position="213"/>
    </location>
</feature>
<feature type="non-terminal residue">
    <location>
        <position position="1"/>
    </location>
</feature>
<reference key="1">
    <citation type="journal article" date="1992" name="Ann. Mo. Bot. Gard.">
        <title>Monophyly of the Asteridae and identification of their major lineages inferred from DNA sequences of rbcL.</title>
        <authorList>
            <person name="Olmstead R.G."/>
            <person name="Michaels H.J."/>
            <person name="Scott K.M."/>
            <person name="Palmer J.D."/>
        </authorList>
        <dbReference type="AGRICOLA" id="IND93014998"/>
    </citation>
    <scope>NUCLEOTIDE SEQUENCE [GENOMIC DNA]</scope>
</reference>
<organism>
    <name type="scientific">Symphoricarpos albus</name>
    <name type="common">Common snowberry</name>
    <name type="synonym">Vaccinium album</name>
    <dbReference type="NCBI Taxonomy" id="13702"/>
    <lineage>
        <taxon>Eukaryota</taxon>
        <taxon>Viridiplantae</taxon>
        <taxon>Streptophyta</taxon>
        <taxon>Embryophyta</taxon>
        <taxon>Tracheophyta</taxon>
        <taxon>Spermatophyta</taxon>
        <taxon>Magnoliopsida</taxon>
        <taxon>eudicotyledons</taxon>
        <taxon>Gunneridae</taxon>
        <taxon>Pentapetalae</taxon>
        <taxon>asterids</taxon>
        <taxon>campanulids</taxon>
        <taxon>Dipsacales</taxon>
        <taxon>Caprifoliaceae</taxon>
        <taxon>Symphoricarpos</taxon>
    </lineage>
</organism>
<evidence type="ECO:0000255" key="1">
    <source>
        <dbReference type="HAMAP-Rule" id="MF_01338"/>
    </source>
</evidence>
<comment type="function">
    <text evidence="1">RuBisCO catalyzes two reactions: the carboxylation of D-ribulose 1,5-bisphosphate, the primary event in carbon dioxide fixation, as well as the oxidative fragmentation of the pentose substrate in the photorespiration process. Both reactions occur simultaneously and in competition at the same active site.</text>
</comment>
<comment type="catalytic activity">
    <reaction evidence="1">
        <text>2 (2R)-3-phosphoglycerate + 2 H(+) = D-ribulose 1,5-bisphosphate + CO2 + H2O</text>
        <dbReference type="Rhea" id="RHEA:23124"/>
        <dbReference type="ChEBI" id="CHEBI:15377"/>
        <dbReference type="ChEBI" id="CHEBI:15378"/>
        <dbReference type="ChEBI" id="CHEBI:16526"/>
        <dbReference type="ChEBI" id="CHEBI:57870"/>
        <dbReference type="ChEBI" id="CHEBI:58272"/>
        <dbReference type="EC" id="4.1.1.39"/>
    </reaction>
</comment>
<comment type="catalytic activity">
    <reaction evidence="1">
        <text>D-ribulose 1,5-bisphosphate + O2 = 2-phosphoglycolate + (2R)-3-phosphoglycerate + 2 H(+)</text>
        <dbReference type="Rhea" id="RHEA:36631"/>
        <dbReference type="ChEBI" id="CHEBI:15378"/>
        <dbReference type="ChEBI" id="CHEBI:15379"/>
        <dbReference type="ChEBI" id="CHEBI:57870"/>
        <dbReference type="ChEBI" id="CHEBI:58033"/>
        <dbReference type="ChEBI" id="CHEBI:58272"/>
    </reaction>
</comment>
<comment type="cofactor">
    <cofactor evidence="1">
        <name>Mg(2+)</name>
        <dbReference type="ChEBI" id="CHEBI:18420"/>
    </cofactor>
    <text evidence="1">Binds 1 Mg(2+) ion per subunit.</text>
</comment>
<comment type="subunit">
    <text evidence="1">Heterohexadecamer of 8 large chains and 8 small chains; disulfide-linked. The disulfide link is formed within the large subunit homodimers.</text>
</comment>
<comment type="subcellular location">
    <subcellularLocation>
        <location>Plastid</location>
        <location>Chloroplast</location>
    </subcellularLocation>
</comment>
<comment type="PTM">
    <text evidence="1">The disulfide bond which can form in the large chain dimeric partners within the hexadecamer appears to be associated with oxidative stress and protein turnover.</text>
</comment>
<comment type="miscellaneous">
    <text evidence="1">The basic functional RuBisCO is composed of a large chain homodimer in a 'head-to-tail' conformation. In form I RuBisCO this homodimer is arranged in a barrel-like tetramer with the small subunits forming a tetrameric 'cap' on each end of the 'barrel'.</text>
</comment>
<comment type="similarity">
    <text evidence="1">Belongs to the RuBisCO large chain family. Type I subfamily.</text>
</comment>
<geneLocation type="chloroplast"/>
<protein>
    <recommendedName>
        <fullName evidence="1">Ribulose bisphosphate carboxylase large chain</fullName>
        <shortName evidence="1">RuBisCO large subunit</shortName>
        <ecNumber evidence="1">4.1.1.39</ecNumber>
    </recommendedName>
</protein>